<evidence type="ECO:0000255" key="1">
    <source>
        <dbReference type="HAMAP-Rule" id="MF_01710"/>
    </source>
</evidence>
<feature type="chain" id="PRO_0000287939" description="Energy-coupling factor transporter ATP-binding protein EcfA1">
    <location>
        <begin position="1"/>
        <end position="279"/>
    </location>
</feature>
<feature type="domain" description="ABC transporter" evidence="1">
    <location>
        <begin position="6"/>
        <end position="240"/>
    </location>
</feature>
<feature type="binding site" evidence="1">
    <location>
        <begin position="40"/>
        <end position="47"/>
    </location>
    <ligand>
        <name>ATP</name>
        <dbReference type="ChEBI" id="CHEBI:30616"/>
    </ligand>
</feature>
<reference key="1">
    <citation type="journal article" date="2004" name="Nucleic Acids Res.">
        <title>Thermoadaptation trait revealed by the genome sequence of thermophilic Geobacillus kaustophilus.</title>
        <authorList>
            <person name="Takami H."/>
            <person name="Takaki Y."/>
            <person name="Chee G.-J."/>
            <person name="Nishi S."/>
            <person name="Shimamura S."/>
            <person name="Suzuki H."/>
            <person name="Matsui S."/>
            <person name="Uchiyama I."/>
        </authorList>
    </citation>
    <scope>NUCLEOTIDE SEQUENCE [LARGE SCALE GENOMIC DNA]</scope>
    <source>
        <strain>HTA426</strain>
    </source>
</reference>
<protein>
    <recommendedName>
        <fullName evidence="1">Energy-coupling factor transporter ATP-binding protein EcfA1</fullName>
        <shortName evidence="1">ECF transporter A component EcfA1</shortName>
        <ecNumber evidence="1">7.-.-.-</ecNumber>
    </recommendedName>
</protein>
<proteinExistence type="inferred from homology"/>
<name>ECFA1_GEOKA</name>
<comment type="function">
    <text evidence="1">ATP-binding (A) component of a common energy-coupling factor (ECF) ABC-transporter complex. Unlike classic ABC transporters this ECF transporter provides the energy necessary to transport a number of different substrates.</text>
</comment>
<comment type="subunit">
    <text evidence="1">Forms a stable energy-coupling factor (ECF) transporter complex composed of 2 membrane-embedded substrate-binding proteins (S component), 2 ATP-binding proteins (A component) and 2 transmembrane proteins (T component).</text>
</comment>
<comment type="subcellular location">
    <subcellularLocation>
        <location evidence="1">Cell membrane</location>
        <topology evidence="1">Peripheral membrane protein</topology>
    </subcellularLocation>
</comment>
<comment type="similarity">
    <text evidence="1">Belongs to the ABC transporter superfamily. Energy-coupling factor EcfA family.</text>
</comment>
<sequence>MAEPILSIEGVSFRYPNQSDYAVQNVSFTAERGEWLAIVGHNGSGKSTIARMLIGLLRPERGAIRLFGRLLNDATVWEVRRRVGLVFQNPDNQFVGATVEDDIAFALENNGIPRLEMVERIREAIRQVHMEPFLHYEPHRLSGGQKQRVAIAGILALRPDMIILDEATSMLDPRGREEVLETVRRLNRQQRITVLSITHDLEEAAKADRLIVMNKGEVMAEGTPEQIFRLGSKLERIGLDLPFAVKMGSRLREQGIPLRAGYFTTEELVEELWTLYSKK</sequence>
<organism>
    <name type="scientific">Geobacillus kaustophilus (strain HTA426)</name>
    <dbReference type="NCBI Taxonomy" id="235909"/>
    <lineage>
        <taxon>Bacteria</taxon>
        <taxon>Bacillati</taxon>
        <taxon>Bacillota</taxon>
        <taxon>Bacilli</taxon>
        <taxon>Bacillales</taxon>
        <taxon>Anoxybacillaceae</taxon>
        <taxon>Geobacillus</taxon>
        <taxon>Geobacillus thermoleovorans group</taxon>
    </lineage>
</organism>
<gene>
    <name evidence="1" type="primary">ecfA1</name>
    <name type="synonym">cbiO1</name>
    <name type="ordered locus">GK0135</name>
</gene>
<keyword id="KW-0067">ATP-binding</keyword>
<keyword id="KW-1003">Cell membrane</keyword>
<keyword id="KW-0472">Membrane</keyword>
<keyword id="KW-0547">Nucleotide-binding</keyword>
<keyword id="KW-1185">Reference proteome</keyword>
<keyword id="KW-1278">Translocase</keyword>
<keyword id="KW-0813">Transport</keyword>
<dbReference type="EC" id="7.-.-.-" evidence="1"/>
<dbReference type="EMBL" id="BA000043">
    <property type="protein sequence ID" value="BAD74420.1"/>
    <property type="molecule type" value="Genomic_DNA"/>
</dbReference>
<dbReference type="RefSeq" id="WP_011229647.1">
    <property type="nucleotide sequence ID" value="NC_006510.1"/>
</dbReference>
<dbReference type="SMR" id="Q5L3R0"/>
<dbReference type="STRING" id="235909.GK0135"/>
<dbReference type="KEGG" id="gka:GK0135"/>
<dbReference type="eggNOG" id="COG1122">
    <property type="taxonomic scope" value="Bacteria"/>
</dbReference>
<dbReference type="HOGENOM" id="CLU_000604_1_22_9"/>
<dbReference type="Proteomes" id="UP000001172">
    <property type="component" value="Chromosome"/>
</dbReference>
<dbReference type="GO" id="GO:0043190">
    <property type="term" value="C:ATP-binding cassette (ABC) transporter complex"/>
    <property type="evidence" value="ECO:0007669"/>
    <property type="project" value="TreeGrafter"/>
</dbReference>
<dbReference type="GO" id="GO:0005524">
    <property type="term" value="F:ATP binding"/>
    <property type="evidence" value="ECO:0007669"/>
    <property type="project" value="UniProtKB-KW"/>
</dbReference>
<dbReference type="GO" id="GO:0016887">
    <property type="term" value="F:ATP hydrolysis activity"/>
    <property type="evidence" value="ECO:0007669"/>
    <property type="project" value="InterPro"/>
</dbReference>
<dbReference type="GO" id="GO:0042626">
    <property type="term" value="F:ATPase-coupled transmembrane transporter activity"/>
    <property type="evidence" value="ECO:0007669"/>
    <property type="project" value="TreeGrafter"/>
</dbReference>
<dbReference type="CDD" id="cd03225">
    <property type="entry name" value="ABC_cobalt_CbiO_domain1"/>
    <property type="match status" value="1"/>
</dbReference>
<dbReference type="FunFam" id="3.40.50.300:FF:000224">
    <property type="entry name" value="Energy-coupling factor transporter ATP-binding protein EcfA"/>
    <property type="match status" value="1"/>
</dbReference>
<dbReference type="Gene3D" id="3.40.50.300">
    <property type="entry name" value="P-loop containing nucleotide triphosphate hydrolases"/>
    <property type="match status" value="1"/>
</dbReference>
<dbReference type="InterPro" id="IPR003593">
    <property type="entry name" value="AAA+_ATPase"/>
</dbReference>
<dbReference type="InterPro" id="IPR003439">
    <property type="entry name" value="ABC_transporter-like_ATP-bd"/>
</dbReference>
<dbReference type="InterPro" id="IPR017871">
    <property type="entry name" value="ABC_transporter-like_CS"/>
</dbReference>
<dbReference type="InterPro" id="IPR015856">
    <property type="entry name" value="ABC_transpr_CbiO/EcfA_su"/>
</dbReference>
<dbReference type="InterPro" id="IPR050095">
    <property type="entry name" value="ECF_ABC_transporter_ATP-bd"/>
</dbReference>
<dbReference type="InterPro" id="IPR030947">
    <property type="entry name" value="EcfA_1"/>
</dbReference>
<dbReference type="InterPro" id="IPR027417">
    <property type="entry name" value="P-loop_NTPase"/>
</dbReference>
<dbReference type="NCBIfam" id="TIGR04520">
    <property type="entry name" value="ECF_ATPase_1"/>
    <property type="match status" value="1"/>
</dbReference>
<dbReference type="NCBIfam" id="NF010156">
    <property type="entry name" value="PRK13635.1"/>
    <property type="match status" value="1"/>
</dbReference>
<dbReference type="NCBIfam" id="NF010167">
    <property type="entry name" value="PRK13648.1"/>
    <property type="match status" value="1"/>
</dbReference>
<dbReference type="PANTHER" id="PTHR43553:SF24">
    <property type="entry name" value="ENERGY-COUPLING FACTOR TRANSPORTER ATP-BINDING PROTEIN ECFA1"/>
    <property type="match status" value="1"/>
</dbReference>
<dbReference type="PANTHER" id="PTHR43553">
    <property type="entry name" value="HEAVY METAL TRANSPORTER"/>
    <property type="match status" value="1"/>
</dbReference>
<dbReference type="Pfam" id="PF00005">
    <property type="entry name" value="ABC_tran"/>
    <property type="match status" value="1"/>
</dbReference>
<dbReference type="SMART" id="SM00382">
    <property type="entry name" value="AAA"/>
    <property type="match status" value="1"/>
</dbReference>
<dbReference type="SUPFAM" id="SSF52540">
    <property type="entry name" value="P-loop containing nucleoside triphosphate hydrolases"/>
    <property type="match status" value="1"/>
</dbReference>
<dbReference type="PROSITE" id="PS00211">
    <property type="entry name" value="ABC_TRANSPORTER_1"/>
    <property type="match status" value="1"/>
</dbReference>
<dbReference type="PROSITE" id="PS50893">
    <property type="entry name" value="ABC_TRANSPORTER_2"/>
    <property type="match status" value="1"/>
</dbReference>
<dbReference type="PROSITE" id="PS51246">
    <property type="entry name" value="CBIO"/>
    <property type="match status" value="1"/>
</dbReference>
<accession>Q5L3R0</accession>